<sequence length="462" mass="50397">MRNPLGLRFSTGHALLASALAPPCIIAFLETRYWWAGIALASLGVIVATVTFYGRRITGWVAAVYAWLRRRRRPPDSSSEPVVGATVKPGDHVAVRWQGEFLVAVIELIPRPFTPTVIVDGQAHTDDMLDTGLVEELLSVHCPDLEADIVSAGYRVGNTAAPDVVSLYQQVIGTDPAPANRRTWIVLRADPERTRKSAQRRDEGVAGLARYLVASATRIADRLASHGVDAVCGRSFDDYDHATDIGFVREKWSMIKGRDAYTAAYAAPGGPDVWWSARADHTITRVRVAPGMAPQSTVLLTTADKPKTPRGFARLFGGQRPALQGQHLVANRHCQLPIGSAGVLVGETVNRCPVYMPFDDVDIALNLGDAQTFTQFVVRAAAAGAMVTVGPQFEEFARLIGAHIGQEVKVAWPNATTYLGPHPGIDRVILRHNVIGTPRHRQLPIRRVSPPEESRYQMALPK</sequence>
<protein>
    <recommendedName>
        <fullName evidence="6">ESX-1 secretion system protein EccE1</fullName>
    </recommendedName>
    <alternativeName>
        <fullName evidence="5">ESX conserved component E1</fullName>
    </alternativeName>
    <alternativeName>
        <fullName evidence="6">Type VII secretion system protein EccE1</fullName>
        <shortName evidence="6">T7SS protein EccE1</shortName>
    </alternativeName>
</protein>
<reference key="1">
    <citation type="journal article" date="1998" name="Nature">
        <title>Deciphering the biology of Mycobacterium tuberculosis from the complete genome sequence.</title>
        <authorList>
            <person name="Cole S.T."/>
            <person name="Brosch R."/>
            <person name="Parkhill J."/>
            <person name="Garnier T."/>
            <person name="Churcher C.M."/>
            <person name="Harris D.E."/>
            <person name="Gordon S.V."/>
            <person name="Eiglmeier K."/>
            <person name="Gas S."/>
            <person name="Barry C.E. III"/>
            <person name="Tekaia F."/>
            <person name="Badcock K."/>
            <person name="Basham D."/>
            <person name="Brown D."/>
            <person name="Chillingworth T."/>
            <person name="Connor R."/>
            <person name="Davies R.M."/>
            <person name="Devlin K."/>
            <person name="Feltwell T."/>
            <person name="Gentles S."/>
            <person name="Hamlin N."/>
            <person name="Holroyd S."/>
            <person name="Hornsby T."/>
            <person name="Jagels K."/>
            <person name="Krogh A."/>
            <person name="McLean J."/>
            <person name="Moule S."/>
            <person name="Murphy L.D."/>
            <person name="Oliver S."/>
            <person name="Osborne J."/>
            <person name="Quail M.A."/>
            <person name="Rajandream M.A."/>
            <person name="Rogers J."/>
            <person name="Rutter S."/>
            <person name="Seeger K."/>
            <person name="Skelton S."/>
            <person name="Squares S."/>
            <person name="Squares R."/>
            <person name="Sulston J.E."/>
            <person name="Taylor K."/>
            <person name="Whitehead S."/>
            <person name="Barrell B.G."/>
        </authorList>
    </citation>
    <scope>NUCLEOTIDE SEQUENCE [LARGE SCALE GENOMIC DNA]</scope>
    <source>
        <strain>ATCC 25618 / H37Rv</strain>
    </source>
</reference>
<reference key="2">
    <citation type="journal article" date="2005" name="Mol. Microbiol.">
        <title>A non-RD1 gene cluster is required for Snm secretion in Mycobacterium tuberculosis.</title>
        <authorList>
            <person name="MacGurn J.A."/>
            <person name="Raghavan S."/>
            <person name="Stanley S.A."/>
            <person name="Cox J.S."/>
        </authorList>
    </citation>
    <scope>INTERACTION WITH ESPD</scope>
    <source>
        <strain>ATCC 35801 / TMC 107 / Erdman</strain>
    </source>
</reference>
<reference key="3">
    <citation type="journal article" date="2008" name="BMC Syst. Biol.">
        <title>targetTB: a target identification pipeline for Mycobacterium tuberculosis through an interactome, reactome and genome-scale structural analysis.</title>
        <authorList>
            <person name="Raman K."/>
            <person name="Yeturu K."/>
            <person name="Chandra N."/>
        </authorList>
    </citation>
    <scope>IDENTIFICATION AS A DRUG TARGET [LARGE SCALE ANALYSIS]</scope>
</reference>
<reference key="4">
    <citation type="journal article" date="2009" name="PLoS Pathog.">
        <title>Systematic genetic nomenclature for type VII secretion systems.</title>
        <authorList>
            <person name="Bitter W."/>
            <person name="Houben E.N."/>
            <person name="Bottai D."/>
            <person name="Brodin P."/>
            <person name="Brown E.J."/>
            <person name="Cox J.S."/>
            <person name="Derbyshire K."/>
            <person name="Fortune S.M."/>
            <person name="Gao L.Y."/>
            <person name="Liu J."/>
            <person name="Gey van Pittius N.C."/>
            <person name="Pym A.S."/>
            <person name="Rubin E.J."/>
            <person name="Sherman D.R."/>
            <person name="Cole S.T."/>
            <person name="Brosch R."/>
        </authorList>
    </citation>
    <scope>FUNCTION</scope>
    <scope>SUBUNIT</scope>
    <scope>NOMENCLATURE</scope>
</reference>
<reference key="5">
    <citation type="journal article" date="2011" name="Mol. Cell. Proteomics">
        <title>Proteogenomic analysis of Mycobacterium tuberculosis by high resolution mass spectrometry.</title>
        <authorList>
            <person name="Kelkar D.S."/>
            <person name="Kumar D."/>
            <person name="Kumar P."/>
            <person name="Balakrishnan L."/>
            <person name="Muthusamy B."/>
            <person name="Yadav A.K."/>
            <person name="Shrivastava P."/>
            <person name="Marimuthu A."/>
            <person name="Anand S."/>
            <person name="Sundaram H."/>
            <person name="Kingsbury R."/>
            <person name="Harsha H.C."/>
            <person name="Nair B."/>
            <person name="Prasad T.S."/>
            <person name="Chauhan D.S."/>
            <person name="Katoch K."/>
            <person name="Katoch V.M."/>
            <person name="Kumar P."/>
            <person name="Chaerkady R."/>
            <person name="Ramachandran S."/>
            <person name="Dash D."/>
            <person name="Pandey A."/>
        </authorList>
    </citation>
    <scope>IDENTIFICATION BY MASS SPECTROMETRY [LARGE SCALE ANALYSIS]</scope>
    <source>
        <strain>ATCC 25618 / H37Rv</strain>
    </source>
</reference>
<name>ECCE1_MYCTU</name>
<proteinExistence type="evidence at protein level"/>
<organism>
    <name type="scientific">Mycobacterium tuberculosis (strain ATCC 25618 / H37Rv)</name>
    <dbReference type="NCBI Taxonomy" id="83332"/>
    <lineage>
        <taxon>Bacteria</taxon>
        <taxon>Bacillati</taxon>
        <taxon>Actinomycetota</taxon>
        <taxon>Actinomycetes</taxon>
        <taxon>Mycobacteriales</taxon>
        <taxon>Mycobacteriaceae</taxon>
        <taxon>Mycobacterium</taxon>
        <taxon>Mycobacterium tuberculosis complex</taxon>
    </lineage>
</organism>
<comment type="function">
    <text evidence="7">Part of the ESX-1 specialized secretion system, which delivers several virulence factors to host cells during infection, including the key virulence factors EsxA (ESAT-6) and EsxB (CFP-10).</text>
</comment>
<comment type="subunit">
    <text evidence="2 7">Part of the ESX-1 / type VII secretion system (T7SS), which is composed of cytosolic and membrane components. The ESX-1 membrane complex is composed of EccB1, EccCa1, EccCb1, EccD1 and EccE1 (PubMed:19876390). Interacts with EspD (PubMed:16135231).</text>
</comment>
<comment type="subcellular location">
    <subcellularLocation>
        <location evidence="6">Cell inner membrane</location>
        <topology evidence="1">Multi-pass membrane protein</topology>
    </subcellularLocation>
</comment>
<comment type="miscellaneous">
    <text evidence="3">Was identified as a high-confidence drug target.</text>
</comment>
<comment type="similarity">
    <text evidence="6">Belongs to the EccE family.</text>
</comment>
<feature type="chain" id="PRO_0000393869" description="ESX-1 secretion system protein EccE1">
    <location>
        <begin position="1"/>
        <end position="462"/>
    </location>
</feature>
<feature type="transmembrane region" description="Helical" evidence="1">
    <location>
        <begin position="9"/>
        <end position="29"/>
    </location>
</feature>
<feature type="transmembrane region" description="Helical" evidence="1">
    <location>
        <begin position="34"/>
        <end position="54"/>
    </location>
</feature>
<gene>
    <name evidence="5" type="primary">eccE1</name>
    <name evidence="4" type="synonym">snm7</name>
    <name type="ordered locus">Rv3882c</name>
</gene>
<accession>P9WJE9</accession>
<accession>L0TGW4</accession>
<accession>O05462</accession>
<accession>Q7D4N9</accession>
<keyword id="KW-0997">Cell inner membrane</keyword>
<keyword id="KW-1003">Cell membrane</keyword>
<keyword id="KW-0472">Membrane</keyword>
<keyword id="KW-1185">Reference proteome</keyword>
<keyword id="KW-0812">Transmembrane</keyword>
<keyword id="KW-1133">Transmembrane helix</keyword>
<keyword id="KW-0813">Transport</keyword>
<evidence type="ECO:0000255" key="1"/>
<evidence type="ECO:0000269" key="2">
    <source>
    </source>
</evidence>
<evidence type="ECO:0000269" key="3">
    <source>
    </source>
</evidence>
<evidence type="ECO:0000303" key="4">
    <source>
    </source>
</evidence>
<evidence type="ECO:0000303" key="5">
    <source>
    </source>
</evidence>
<evidence type="ECO:0000305" key="6"/>
<evidence type="ECO:0000305" key="7">
    <source>
    </source>
</evidence>
<dbReference type="EMBL" id="AL123456">
    <property type="protein sequence ID" value="CCP46711.1"/>
    <property type="molecule type" value="Genomic_DNA"/>
</dbReference>
<dbReference type="PIR" id="C70597">
    <property type="entry name" value="C70597"/>
</dbReference>
<dbReference type="RefSeq" id="NP_218399.1">
    <property type="nucleotide sequence ID" value="NC_000962.3"/>
</dbReference>
<dbReference type="RefSeq" id="WP_003400000.1">
    <property type="nucleotide sequence ID" value="NZ_NVQJ01000082.1"/>
</dbReference>
<dbReference type="STRING" id="83332.Rv3882c"/>
<dbReference type="PaxDb" id="83332-Rv3882c"/>
<dbReference type="DNASU" id="886208"/>
<dbReference type="GeneID" id="45427885"/>
<dbReference type="GeneID" id="886208"/>
<dbReference type="KEGG" id="mtu:Rv3882c"/>
<dbReference type="KEGG" id="mtv:RVBD_3882c"/>
<dbReference type="TubercuList" id="Rv3882c"/>
<dbReference type="eggNOG" id="ENOG5031ZQC">
    <property type="taxonomic scope" value="Bacteria"/>
</dbReference>
<dbReference type="InParanoid" id="P9WJE9"/>
<dbReference type="OrthoDB" id="4152590at2"/>
<dbReference type="Proteomes" id="UP000001584">
    <property type="component" value="Chromosome"/>
</dbReference>
<dbReference type="GO" id="GO:0005886">
    <property type="term" value="C:plasma membrane"/>
    <property type="evidence" value="ECO:0007005"/>
    <property type="project" value="MTBBASE"/>
</dbReference>
<dbReference type="InterPro" id="IPR050051">
    <property type="entry name" value="EccE_dom"/>
</dbReference>
<dbReference type="InterPro" id="IPR021368">
    <property type="entry name" value="T7SS_EccE"/>
</dbReference>
<dbReference type="NCBIfam" id="TIGR03923">
    <property type="entry name" value="T7SS_EccE"/>
    <property type="match status" value="1"/>
</dbReference>
<dbReference type="Pfam" id="PF11203">
    <property type="entry name" value="EccE"/>
    <property type="match status" value="1"/>
</dbReference>